<gene>
    <name evidence="2" type="primary">e(y)2</name>
    <name type="ORF">GF20364</name>
</gene>
<sequence>MTVSNTVDQYTVLSGDRSKIKDLLCNRLTECGWRDEVRLLCRTILLEKGTGNSFTVEQLITEVTPKARTLVPDAVKKELLMKIRTILTENESEIEDAEEP</sequence>
<proteinExistence type="inferred from homology"/>
<protein>
    <recommendedName>
        <fullName evidence="2">Enhancer of yellow 2 transcription factor</fullName>
    </recommendedName>
</protein>
<evidence type="ECO:0000250" key="1"/>
<evidence type="ECO:0000255" key="2">
    <source>
        <dbReference type="HAMAP-Rule" id="MF_03046"/>
    </source>
</evidence>
<reference key="1">
    <citation type="journal article" date="2007" name="Nature">
        <title>Evolution of genes and genomes on the Drosophila phylogeny.</title>
        <authorList>
            <consortium name="Drosophila 12 genomes consortium"/>
        </authorList>
    </citation>
    <scope>NUCLEOTIDE SEQUENCE [LARGE SCALE GENOMIC DNA]</scope>
    <source>
        <strain>Tucson 14024-0371.13</strain>
    </source>
</reference>
<dbReference type="EMBL" id="CH902621">
    <property type="protein sequence ID" value="EDV44450.1"/>
    <property type="molecule type" value="Genomic_DNA"/>
</dbReference>
<dbReference type="SMR" id="B3MQ24"/>
<dbReference type="FunCoup" id="B3MQ24">
    <property type="interactions" value="1616"/>
</dbReference>
<dbReference type="STRING" id="7217.B3MQ24"/>
<dbReference type="EnsemblMetazoa" id="FBtr0125064">
    <property type="protein sequence ID" value="FBpp0123556"/>
    <property type="gene ID" value="FBgn0097371"/>
</dbReference>
<dbReference type="EnsemblMetazoa" id="XM_001963338.3">
    <property type="protein sequence ID" value="XP_001963374.1"/>
    <property type="gene ID" value="LOC6503072"/>
</dbReference>
<dbReference type="GeneID" id="6503072"/>
<dbReference type="KEGG" id="dan:6503072"/>
<dbReference type="CTD" id="45848"/>
<dbReference type="eggNOG" id="KOG4479">
    <property type="taxonomic scope" value="Eukaryota"/>
</dbReference>
<dbReference type="HOGENOM" id="CLU_134052_1_2_1"/>
<dbReference type="InParanoid" id="B3MQ24"/>
<dbReference type="OMA" id="RLMCRNI"/>
<dbReference type="OrthoDB" id="6221744at2759"/>
<dbReference type="PhylomeDB" id="B3MQ24"/>
<dbReference type="Proteomes" id="UP000007801">
    <property type="component" value="Unassembled WGS sequence"/>
</dbReference>
<dbReference type="GO" id="GO:0005737">
    <property type="term" value="C:cytoplasm"/>
    <property type="evidence" value="ECO:0007669"/>
    <property type="project" value="UniProtKB-SubCell"/>
</dbReference>
<dbReference type="GO" id="GO:0071819">
    <property type="term" value="C:DUBm complex"/>
    <property type="evidence" value="ECO:0007669"/>
    <property type="project" value="UniProtKB-UniRule"/>
</dbReference>
<dbReference type="GO" id="GO:0034399">
    <property type="term" value="C:nuclear periphery"/>
    <property type="evidence" value="ECO:0007669"/>
    <property type="project" value="EnsemblMetazoa"/>
</dbReference>
<dbReference type="GO" id="GO:0005643">
    <property type="term" value="C:nuclear pore"/>
    <property type="evidence" value="ECO:0000250"/>
    <property type="project" value="UniProtKB"/>
</dbReference>
<dbReference type="GO" id="GO:0005654">
    <property type="term" value="C:nucleoplasm"/>
    <property type="evidence" value="ECO:0007669"/>
    <property type="project" value="UniProtKB-SubCell"/>
</dbReference>
<dbReference type="GO" id="GO:0000124">
    <property type="term" value="C:SAGA complex"/>
    <property type="evidence" value="ECO:0000250"/>
    <property type="project" value="UniProtKB"/>
</dbReference>
<dbReference type="GO" id="GO:0070390">
    <property type="term" value="C:transcription export complex 2"/>
    <property type="evidence" value="ECO:0007669"/>
    <property type="project" value="UniProtKB-UniRule"/>
</dbReference>
<dbReference type="GO" id="GO:0070742">
    <property type="term" value="F:C2H2 zinc finger domain binding"/>
    <property type="evidence" value="ECO:0007669"/>
    <property type="project" value="EnsemblMetazoa"/>
</dbReference>
<dbReference type="GO" id="GO:0043035">
    <property type="term" value="F:chromatin insulator sequence binding"/>
    <property type="evidence" value="ECO:0000250"/>
    <property type="project" value="UniProtKB"/>
</dbReference>
<dbReference type="GO" id="GO:0001094">
    <property type="term" value="F:TFIID-class transcription factor complex binding"/>
    <property type="evidence" value="ECO:0007669"/>
    <property type="project" value="EnsemblMetazoa"/>
</dbReference>
<dbReference type="GO" id="GO:0003713">
    <property type="term" value="F:transcription coactivator activity"/>
    <property type="evidence" value="ECO:0007669"/>
    <property type="project" value="UniProtKB-UniRule"/>
</dbReference>
<dbReference type="GO" id="GO:0033696">
    <property type="term" value="P:heterochromatin boundary formation"/>
    <property type="evidence" value="ECO:0007669"/>
    <property type="project" value="EnsemblMetazoa"/>
</dbReference>
<dbReference type="GO" id="GO:0006406">
    <property type="term" value="P:mRNA export from nucleus"/>
    <property type="evidence" value="ECO:0000250"/>
    <property type="project" value="UniProtKB"/>
</dbReference>
<dbReference type="GO" id="GO:0016973">
    <property type="term" value="P:poly(A)+ mRNA export from nucleus"/>
    <property type="evidence" value="ECO:0007669"/>
    <property type="project" value="EnsemblMetazoa"/>
</dbReference>
<dbReference type="GO" id="GO:0045944">
    <property type="term" value="P:positive regulation of transcription by RNA polymerase II"/>
    <property type="evidence" value="ECO:0000250"/>
    <property type="project" value="UniProtKB"/>
</dbReference>
<dbReference type="GO" id="GO:0015031">
    <property type="term" value="P:protein transport"/>
    <property type="evidence" value="ECO:0007669"/>
    <property type="project" value="UniProtKB-KW"/>
</dbReference>
<dbReference type="GO" id="GO:0006368">
    <property type="term" value="P:transcription elongation by RNA polymerase II"/>
    <property type="evidence" value="ECO:0007669"/>
    <property type="project" value="UniProtKB-UniRule"/>
</dbReference>
<dbReference type="FunFam" id="1.10.246.140:FF:000002">
    <property type="entry name" value="Enhancer of yellow 2 transcription factor"/>
    <property type="match status" value="1"/>
</dbReference>
<dbReference type="Gene3D" id="1.10.246.140">
    <property type="match status" value="1"/>
</dbReference>
<dbReference type="HAMAP" id="MF_03046">
    <property type="entry name" value="ENY2_Sus1"/>
    <property type="match status" value="1"/>
</dbReference>
<dbReference type="InterPro" id="IPR018783">
    <property type="entry name" value="TF_ENY2"/>
</dbReference>
<dbReference type="InterPro" id="IPR038212">
    <property type="entry name" value="TF_EnY2_sf"/>
</dbReference>
<dbReference type="PANTHER" id="PTHR12514">
    <property type="entry name" value="ENHANCER OF YELLOW 2 TRANSCRIPTION FACTOR"/>
    <property type="match status" value="1"/>
</dbReference>
<dbReference type="Pfam" id="PF10163">
    <property type="entry name" value="EnY2"/>
    <property type="match status" value="1"/>
</dbReference>
<organism>
    <name type="scientific">Drosophila ananassae</name>
    <name type="common">Fruit fly</name>
    <dbReference type="NCBI Taxonomy" id="7217"/>
    <lineage>
        <taxon>Eukaryota</taxon>
        <taxon>Metazoa</taxon>
        <taxon>Ecdysozoa</taxon>
        <taxon>Arthropoda</taxon>
        <taxon>Hexapoda</taxon>
        <taxon>Insecta</taxon>
        <taxon>Pterygota</taxon>
        <taxon>Neoptera</taxon>
        <taxon>Endopterygota</taxon>
        <taxon>Diptera</taxon>
        <taxon>Brachycera</taxon>
        <taxon>Muscomorpha</taxon>
        <taxon>Ephydroidea</taxon>
        <taxon>Drosophilidae</taxon>
        <taxon>Drosophila</taxon>
        <taxon>Sophophora</taxon>
    </lineage>
</organism>
<keyword id="KW-0010">Activator</keyword>
<keyword id="KW-0156">Chromatin regulator</keyword>
<keyword id="KW-0963">Cytoplasm</keyword>
<keyword id="KW-0509">mRNA transport</keyword>
<keyword id="KW-0539">Nucleus</keyword>
<keyword id="KW-0653">Protein transport</keyword>
<keyword id="KW-1185">Reference proteome</keyword>
<keyword id="KW-0804">Transcription</keyword>
<keyword id="KW-0805">Transcription regulation</keyword>
<keyword id="KW-0811">Translocation</keyword>
<keyword id="KW-0813">Transport</keyword>
<name>ENY2_DROAN</name>
<feature type="chain" id="PRO_0000367553" description="Enhancer of yellow 2 transcription factor">
    <location>
        <begin position="1"/>
        <end position="100"/>
    </location>
</feature>
<accession>B3MQ24</accession>
<comment type="function">
    <text evidence="1">Involved in mRNA export coupled transcription activation by association with both the AMEX and the SAGA complexes. The SAGA complex is a multiprotein complex that activates transcription by remodeling chromatin and mediating histone acetylation and deubiquitination. Within the SAGA complex, participates in a subcomplex that specifically deubiquitinates histone H2B. The SAGA complex is recruited to specific gene promoters by activators, where it is required for transcription. Required for nuclear receptor-mediated transactivation. Involved in transcription elongation by recruiting the THO complex onto nascent mRNA. The AMEX complex functions in docking export-competent ribonucleoprotein particles (mRNPs) to the nuclear entrance of the nuclear pore complex (nuclear basket). AMEX participates in mRNA export and accurate chromatin positioning in the nucleus by tethering genes to the nuclear periphery (By similarity).</text>
</comment>
<comment type="subunit">
    <text evidence="2">Component of the nuclear pore complex (NPC)-associated AMEX complex (anchoring and mRNA export complex), composed of at least e(y)2 and xmas-2. Component of the SAGA transcription coactivator-HAT complexes, at least composed of Ada2b, e(y)2, Pcaf/Gcn5, Taf10 and Nipped-A/Trrap. Within the SAGA complex, e(y)2, Sgf11, and not/nonstop form an additional subcomplex of SAGA called the DUB module (deubiquitination module). Component of the THO complex, composed of at least e(y)2, HPR1, THO2, THOC5, THOC6 and THOC7. Interacts with e(y)1. Interacts with su(Hw) (via zinc fingers). Interacts with xmas-2; required for localization to the nuclear periphery. Interacts with the nuclear pore complex (NPC).</text>
</comment>
<comment type="subcellular location">
    <subcellularLocation>
        <location evidence="2">Nucleus</location>
        <location evidence="2">Nucleoplasm</location>
    </subcellularLocation>
    <subcellularLocation>
        <location evidence="2">Cytoplasm</location>
    </subcellularLocation>
</comment>
<comment type="similarity">
    <text evidence="2">Belongs to the ENY2 family.</text>
</comment>